<proteinExistence type="evidence at protein level"/>
<keyword id="KW-0025">Alternative splicing</keyword>
<keyword id="KW-0106">Calcium</keyword>
<keyword id="KW-1003">Cell membrane</keyword>
<keyword id="KW-0378">Hydrolase</keyword>
<keyword id="KW-0442">Lipid degradation</keyword>
<keyword id="KW-0443">Lipid metabolism</keyword>
<keyword id="KW-0472">Membrane</keyword>
<keyword id="KW-0479">Metal-binding</keyword>
<keyword id="KW-1185">Reference proteome</keyword>
<keyword id="KW-0677">Repeat</keyword>
<keyword id="KW-0346">Stress response</keyword>
<feature type="chain" id="PRO_0000218815" description="Phospholipase D delta">
    <location>
        <begin position="1"/>
        <end position="868"/>
    </location>
</feature>
<feature type="domain" description="C2" evidence="2">
    <location>
        <begin position="1"/>
        <end position="154"/>
    </location>
</feature>
<feature type="domain" description="PLD phosphodiesterase 1" evidence="3">
    <location>
        <begin position="368"/>
        <end position="403"/>
    </location>
</feature>
<feature type="domain" description="PLD phosphodiesterase 2" evidence="3">
    <location>
        <begin position="713"/>
        <end position="740"/>
    </location>
</feature>
<feature type="active site" evidence="3">
    <location>
        <position position="373"/>
    </location>
</feature>
<feature type="active site" evidence="3">
    <location>
        <position position="375"/>
    </location>
</feature>
<feature type="active site" evidence="3">
    <location>
        <position position="380"/>
    </location>
</feature>
<feature type="active site" evidence="3">
    <location>
        <position position="718"/>
    </location>
</feature>
<feature type="active site" evidence="3">
    <location>
        <position position="720"/>
    </location>
</feature>
<feature type="active site" evidence="3">
    <location>
        <position position="725"/>
    </location>
</feature>
<feature type="binding site" evidence="1">
    <location>
        <position position="216"/>
    </location>
    <ligand>
        <name>Ca(2+)</name>
        <dbReference type="ChEBI" id="CHEBI:29108"/>
    </ligand>
</feature>
<feature type="binding site" evidence="1">
    <location>
        <position position="373"/>
    </location>
    <ligand>
        <name>a 1,2-diacyl-sn-glycero-3-phosphate</name>
        <dbReference type="ChEBI" id="CHEBI:58608"/>
    </ligand>
</feature>
<feature type="binding site" evidence="1">
    <location>
        <position position="409"/>
    </location>
    <ligand>
        <name>Ca(2+)</name>
        <dbReference type="ChEBI" id="CHEBI:29108"/>
    </ligand>
</feature>
<feature type="binding site" evidence="1">
    <location>
        <position position="440"/>
    </location>
    <ligand>
        <name>Ca(2+)</name>
        <dbReference type="ChEBI" id="CHEBI:29108"/>
    </ligand>
</feature>
<feature type="binding site" evidence="1">
    <location>
        <position position="588"/>
    </location>
    <ligand>
        <name>a 1,2-diacyl-sn-glycero-3-phosphate</name>
        <dbReference type="ChEBI" id="CHEBI:58608"/>
    </ligand>
</feature>
<feature type="binding site" evidence="1">
    <location>
        <position position="718"/>
    </location>
    <ligand>
        <name>a 1,2-diacyl-sn-glycero-3-phosphate</name>
        <dbReference type="ChEBI" id="CHEBI:58608"/>
    </ligand>
</feature>
<feature type="binding site" evidence="1">
    <location>
        <position position="781"/>
    </location>
    <ligand>
        <name>Ca(2+)</name>
        <dbReference type="ChEBI" id="CHEBI:29108"/>
    </ligand>
</feature>
<feature type="splice variant" id="VSP_005029" description="In isoform 2." evidence="16 17 19 20">
    <location>
        <begin position="354"/>
        <end position="364"/>
    </location>
</feature>
<feature type="mutagenesis site" description="Total loss of activity." evidence="6">
    <original>R</original>
    <variation>P</variation>
    <location>
        <position position="410"/>
    </location>
</feature>
<feature type="mutagenesis site" description="Loss of 80% of PIP2-stimulated activity and only 50% of oleate-stimulated activity." evidence="6">
    <original>R</original>
    <variation>D</variation>
    <location>
        <position position="622"/>
    </location>
</feature>
<organism>
    <name type="scientific">Arabidopsis thaliana</name>
    <name type="common">Mouse-ear cress</name>
    <dbReference type="NCBI Taxonomy" id="3702"/>
    <lineage>
        <taxon>Eukaryota</taxon>
        <taxon>Viridiplantae</taxon>
        <taxon>Streptophyta</taxon>
        <taxon>Embryophyta</taxon>
        <taxon>Tracheophyta</taxon>
        <taxon>Spermatophyta</taxon>
        <taxon>Magnoliopsida</taxon>
        <taxon>eudicotyledons</taxon>
        <taxon>Gunneridae</taxon>
        <taxon>Pentapetalae</taxon>
        <taxon>rosids</taxon>
        <taxon>malvids</taxon>
        <taxon>Brassicales</taxon>
        <taxon>Brassicaceae</taxon>
        <taxon>Camelineae</taxon>
        <taxon>Arabidopsis</taxon>
    </lineage>
</organism>
<evidence type="ECO:0000250" key="1">
    <source>
        <dbReference type="UniProtKB" id="Q38882"/>
    </source>
</evidence>
<evidence type="ECO:0000255" key="2">
    <source>
        <dbReference type="PROSITE-ProRule" id="PRU00041"/>
    </source>
</evidence>
<evidence type="ECO:0000255" key="3">
    <source>
        <dbReference type="PROSITE-ProRule" id="PRU00153"/>
    </source>
</evidence>
<evidence type="ECO:0000269" key="4">
    <source>
    </source>
</evidence>
<evidence type="ECO:0000269" key="5">
    <source>
    </source>
</evidence>
<evidence type="ECO:0000269" key="6">
    <source>
    </source>
</evidence>
<evidence type="ECO:0000269" key="7">
    <source>
    </source>
</evidence>
<evidence type="ECO:0000269" key="8">
    <source>
    </source>
</evidence>
<evidence type="ECO:0000269" key="9">
    <source>
    </source>
</evidence>
<evidence type="ECO:0000269" key="10">
    <source>
    </source>
</evidence>
<evidence type="ECO:0000269" key="11">
    <source>
    </source>
</evidence>
<evidence type="ECO:0000269" key="12">
    <source>
    </source>
</evidence>
<evidence type="ECO:0000269" key="13">
    <source>
    </source>
</evidence>
<evidence type="ECO:0000269" key="14">
    <source>
    </source>
</evidence>
<evidence type="ECO:0000269" key="15">
    <source>
    </source>
</evidence>
<evidence type="ECO:0000303" key="16">
    <source>
    </source>
</evidence>
<evidence type="ECO:0000303" key="17">
    <source>
    </source>
</evidence>
<evidence type="ECO:0000303" key="18">
    <source>
    </source>
</evidence>
<evidence type="ECO:0000303" key="19">
    <source>
    </source>
</evidence>
<evidence type="ECO:0000303" key="20">
    <source ref="7"/>
</evidence>
<evidence type="ECO:0000305" key="21"/>
<evidence type="ECO:0000312" key="22">
    <source>
        <dbReference type="Araport" id="AT4G35790"/>
    </source>
</evidence>
<evidence type="ECO:0000312" key="23">
    <source>
        <dbReference type="EMBL" id="CAA21465.1"/>
    </source>
</evidence>
<name>PLDD1_ARATH</name>
<accession>Q9C5Y0</accession>
<accession>Q0WUE7</accession>
<accession>Q8L891</accession>
<accession>Q944P8</accession>
<accession>Q947R2</accession>
<accession>Q9FS18</accession>
<accession>Q9SZS7</accession>
<sequence>MAEKVSEDVMLLHGDLDLKIVKARRLPNMDMFSEHLRRLFTACNACARPTDTDDVDPRDKGEFGDKNIRSHRKVITSDPYVTVVVPQATLARTRVLKNSQEPLWDEKFNISIAHPFAYLEFQVKDDDVFGAQIIGTAKIPVRDIASGERISGWFPVLGASGKPPKAETAIFIDMKFTPFDQIHSYRCGIAGDPERRGVRRTYFPVRKGSQVRLYQDAHVMDGTLPAIGLDNGKVYEHGKCWEDICYAISEAHHMIYIVGWSIFHKIKLVRETKVPRDKDMTLGELLKYKSQEGVRVLLLVWDDKTSHDKFGIKTPGVMGTHDEETRKFFKHSSVICVLSPRYASSKLGLFKQQASPSSSIYIMTVVGTLFTHHQKCVLVDTQAVGNNRKVTAFIGGLDLCDGRYDTPEHRILHDLDTVFKDDFHNPTFPAGTKAPRQPWHDLHCRIDGPAAYDVLINFEQRWRKATRWKEFSLRLKGKTHWQDDALIRIGRISWILSPVFKFLKDGTSIIPEDDPCVWVSKEDDPENWHVQIFRSIDSGSVKGFPKYEDEAEAQHLECAKRLVVDKSIQTAYIQTIRSAQHFIYIENQYFLGSSYAWPSYRDAGADNLIPMELALKIVSKIRAKERFAVYVVIPLWPEGDPKSGPVQEILYWQSQTMQMMYDVIAKELKAVQSDAHPLDYLNFYCLGKREQLPDDMPATNGSVVSDSYNFQRFMIYVHAKGMIVDDEYVLMGSANINQRSMAGTKDTEIAMGAYQPNHTWAHKGRHPRGQVYGYRMSLWAEHLGKTGDEFVEPSDLECLKKVNTISEENWKRFIDPKFSELQGHLIKYPLQVDVDGKVSPLPDYETFPDVGGKIIGAHSMALPDTLTT</sequence>
<protein>
    <recommendedName>
        <fullName evidence="18">Phospholipase D delta</fullName>
        <shortName evidence="18">AtPLDdelta</shortName>
        <shortName evidence="18">PLD delta</shortName>
        <ecNumber evidence="6 7">3.1.4.4</ecNumber>
    </recommendedName>
</protein>
<gene>
    <name evidence="18" type="primary">PLDDELTA</name>
    <name evidence="22" type="ordered locus">At4g35790</name>
    <name evidence="23" type="ORF">F4B14.60</name>
</gene>
<reference key="1">
    <citation type="journal article" date="2001" name="Plant Physiol.">
        <title>A novel phospholipase d of Arabidopsis that is activated by oleic acid and associated with the plasma membrane.</title>
        <authorList>
            <person name="Wang C."/>
            <person name="Wang X."/>
        </authorList>
    </citation>
    <scope>NUCLEOTIDE SEQUENCE [MRNA] (ISOFORM 2)</scope>
    <scope>MUTAGENESIS OF ARG-410 AND ARG-622</scope>
    <scope>ACTIVITY REGULATION</scope>
    <scope>CATALYTIC ACTIVITY</scope>
    <scope>COFACTOR</scope>
    <scope>BIOPHYSICOCHEMICAL PROPERTIES</scope>
    <scope>SUBCELLULAR LOCATION</scope>
    <scope>TISSUE SPECIFICITY</scope>
    <source>
        <strain>cv. Columbia</strain>
    </source>
</reference>
<reference key="2">
    <citation type="journal article" date="2001" name="Plant Cell">
        <title>A 90-kD phospholipase D from tobacco binds to microtubules and the plasma membrane.</title>
        <authorList>
            <person name="Gardiner J.C."/>
            <person name="Harper J.D.I."/>
            <person name="Weerakoon N.D."/>
            <person name="Collings D.A."/>
            <person name="Ritchie S."/>
            <person name="Gilroy S."/>
            <person name="Cyr R.J."/>
            <person name="Marc J."/>
        </authorList>
    </citation>
    <scope>NUCLEOTIDE SEQUENCE [MRNA] (ISOFORM 2)</scope>
    <scope>FUNCTION</scope>
</reference>
<reference key="3">
    <citation type="journal article" date="2001" name="Plant J.">
        <title>Involvement of a novel Arabidopsis phospholipase D, AtPLDdelta, in dehydration-inducible accumulation of phosphatidic acid in stress signalling.</title>
        <authorList>
            <person name="Katagiri T."/>
            <person name="Takahashi S."/>
            <person name="Shinozaki K."/>
        </authorList>
    </citation>
    <scope>NUCLEOTIDE SEQUENCE [MRNA] (ISOFORM 1)</scope>
    <scope>FUNCTION</scope>
    <scope>INDUCTION</scope>
    <scope>TISSUE SPECIFICITY</scope>
</reference>
<reference key="4">
    <citation type="journal article" date="1999" name="Nature">
        <title>Sequence and analysis of chromosome 4 of the plant Arabidopsis thaliana.</title>
        <authorList>
            <person name="Mayer K.F.X."/>
            <person name="Schueller C."/>
            <person name="Wambutt R."/>
            <person name="Murphy G."/>
            <person name="Volckaert G."/>
            <person name="Pohl T."/>
            <person name="Duesterhoeft A."/>
            <person name="Stiekema W."/>
            <person name="Entian K.-D."/>
            <person name="Terryn N."/>
            <person name="Harris B."/>
            <person name="Ansorge W."/>
            <person name="Brandt P."/>
            <person name="Grivell L.A."/>
            <person name="Rieger M."/>
            <person name="Weichselgartner M."/>
            <person name="de Simone V."/>
            <person name="Obermaier B."/>
            <person name="Mache R."/>
            <person name="Mueller M."/>
            <person name="Kreis M."/>
            <person name="Delseny M."/>
            <person name="Puigdomenech P."/>
            <person name="Watson M."/>
            <person name="Schmidtheini T."/>
            <person name="Reichert B."/>
            <person name="Portetelle D."/>
            <person name="Perez-Alonso M."/>
            <person name="Boutry M."/>
            <person name="Bancroft I."/>
            <person name="Vos P."/>
            <person name="Hoheisel J."/>
            <person name="Zimmermann W."/>
            <person name="Wedler H."/>
            <person name="Ridley P."/>
            <person name="Langham S.-A."/>
            <person name="McCullagh B."/>
            <person name="Bilham L."/>
            <person name="Robben J."/>
            <person name="van der Schueren J."/>
            <person name="Grymonprez B."/>
            <person name="Chuang Y.-J."/>
            <person name="Vandenbussche F."/>
            <person name="Braeken M."/>
            <person name="Weltjens I."/>
            <person name="Voet M."/>
            <person name="Bastiaens I."/>
            <person name="Aert R."/>
            <person name="Defoor E."/>
            <person name="Weitzenegger T."/>
            <person name="Bothe G."/>
            <person name="Ramsperger U."/>
            <person name="Hilbert H."/>
            <person name="Braun M."/>
            <person name="Holzer E."/>
            <person name="Brandt A."/>
            <person name="Peters S."/>
            <person name="van Staveren M."/>
            <person name="Dirkse W."/>
            <person name="Mooijman P."/>
            <person name="Klein Lankhorst R."/>
            <person name="Rose M."/>
            <person name="Hauf J."/>
            <person name="Koetter P."/>
            <person name="Berneiser S."/>
            <person name="Hempel S."/>
            <person name="Feldpausch M."/>
            <person name="Lamberth S."/>
            <person name="Van den Daele H."/>
            <person name="De Keyser A."/>
            <person name="Buysshaert C."/>
            <person name="Gielen J."/>
            <person name="Villarroel R."/>
            <person name="De Clercq R."/>
            <person name="van Montagu M."/>
            <person name="Rogers J."/>
            <person name="Cronin A."/>
            <person name="Quail M.A."/>
            <person name="Bray-Allen S."/>
            <person name="Clark L."/>
            <person name="Doggett J."/>
            <person name="Hall S."/>
            <person name="Kay M."/>
            <person name="Lennard N."/>
            <person name="McLay K."/>
            <person name="Mayes R."/>
            <person name="Pettett A."/>
            <person name="Rajandream M.A."/>
            <person name="Lyne M."/>
            <person name="Benes V."/>
            <person name="Rechmann S."/>
            <person name="Borkova D."/>
            <person name="Bloecker H."/>
            <person name="Scharfe M."/>
            <person name="Grimm M."/>
            <person name="Loehnert T.-H."/>
            <person name="Dose S."/>
            <person name="de Haan M."/>
            <person name="Maarse A.C."/>
            <person name="Schaefer M."/>
            <person name="Mueller-Auer S."/>
            <person name="Gabel C."/>
            <person name="Fuchs M."/>
            <person name="Fartmann B."/>
            <person name="Granderath K."/>
            <person name="Dauner D."/>
            <person name="Herzl A."/>
            <person name="Neumann S."/>
            <person name="Argiriou A."/>
            <person name="Vitale D."/>
            <person name="Liguori R."/>
            <person name="Piravandi E."/>
            <person name="Massenet O."/>
            <person name="Quigley F."/>
            <person name="Clabauld G."/>
            <person name="Muendlein A."/>
            <person name="Felber R."/>
            <person name="Schnabl S."/>
            <person name="Hiller R."/>
            <person name="Schmidt W."/>
            <person name="Lecharny A."/>
            <person name="Aubourg S."/>
            <person name="Chefdor F."/>
            <person name="Cooke R."/>
            <person name="Berger C."/>
            <person name="Monfort A."/>
            <person name="Casacuberta E."/>
            <person name="Gibbons T."/>
            <person name="Weber N."/>
            <person name="Vandenbol M."/>
            <person name="Bargues M."/>
            <person name="Terol J."/>
            <person name="Torres A."/>
            <person name="Perez-Perez A."/>
            <person name="Purnelle B."/>
            <person name="Bent E."/>
            <person name="Johnson S."/>
            <person name="Tacon D."/>
            <person name="Jesse T."/>
            <person name="Heijnen L."/>
            <person name="Schwarz S."/>
            <person name="Scholler P."/>
            <person name="Heber S."/>
            <person name="Francs P."/>
            <person name="Bielke C."/>
            <person name="Frishman D."/>
            <person name="Haase D."/>
            <person name="Lemcke K."/>
            <person name="Mewes H.-W."/>
            <person name="Stocker S."/>
            <person name="Zaccaria P."/>
            <person name="Bevan M."/>
            <person name="Wilson R.K."/>
            <person name="de la Bastide M."/>
            <person name="Habermann K."/>
            <person name="Parnell L."/>
            <person name="Dedhia N."/>
            <person name="Gnoj L."/>
            <person name="Schutz K."/>
            <person name="Huang E."/>
            <person name="Spiegel L."/>
            <person name="Sekhon M."/>
            <person name="Murray J."/>
            <person name="Sheet P."/>
            <person name="Cordes M."/>
            <person name="Abu-Threideh J."/>
            <person name="Stoneking T."/>
            <person name="Kalicki J."/>
            <person name="Graves T."/>
            <person name="Harmon G."/>
            <person name="Edwards J."/>
            <person name="Latreille P."/>
            <person name="Courtney L."/>
            <person name="Cloud J."/>
            <person name="Abbott A."/>
            <person name="Scott K."/>
            <person name="Johnson D."/>
            <person name="Minx P."/>
            <person name="Bentley D."/>
            <person name="Fulton B."/>
            <person name="Miller N."/>
            <person name="Greco T."/>
            <person name="Kemp K."/>
            <person name="Kramer J."/>
            <person name="Fulton L."/>
            <person name="Mardis E."/>
            <person name="Dante M."/>
            <person name="Pepin K."/>
            <person name="Hillier L.W."/>
            <person name="Nelson J."/>
            <person name="Spieth J."/>
            <person name="Ryan E."/>
            <person name="Andrews S."/>
            <person name="Geisel C."/>
            <person name="Layman D."/>
            <person name="Du H."/>
            <person name="Ali J."/>
            <person name="Berghoff A."/>
            <person name="Jones K."/>
            <person name="Drone K."/>
            <person name="Cotton M."/>
            <person name="Joshu C."/>
            <person name="Antonoiu B."/>
            <person name="Zidanic M."/>
            <person name="Strong C."/>
            <person name="Sun H."/>
            <person name="Lamar B."/>
            <person name="Yordan C."/>
            <person name="Ma P."/>
            <person name="Zhong J."/>
            <person name="Preston R."/>
            <person name="Vil D."/>
            <person name="Shekher M."/>
            <person name="Matero A."/>
            <person name="Shah R."/>
            <person name="Swaby I.K."/>
            <person name="O'Shaughnessy A."/>
            <person name="Rodriguez M."/>
            <person name="Hoffman J."/>
            <person name="Till S."/>
            <person name="Granat S."/>
            <person name="Shohdy N."/>
            <person name="Hasegawa A."/>
            <person name="Hameed A."/>
            <person name="Lodhi M."/>
            <person name="Johnson A."/>
            <person name="Chen E."/>
            <person name="Marra M.A."/>
            <person name="Martienssen R."/>
            <person name="McCombie W.R."/>
        </authorList>
    </citation>
    <scope>NUCLEOTIDE SEQUENCE [LARGE SCALE GENOMIC DNA]</scope>
    <source>
        <strain>cv. Columbia</strain>
    </source>
</reference>
<reference key="5">
    <citation type="journal article" date="2017" name="Plant J.">
        <title>Araport11: a complete reannotation of the Arabidopsis thaliana reference genome.</title>
        <authorList>
            <person name="Cheng C.Y."/>
            <person name="Krishnakumar V."/>
            <person name="Chan A.P."/>
            <person name="Thibaud-Nissen F."/>
            <person name="Schobel S."/>
            <person name="Town C.D."/>
        </authorList>
    </citation>
    <scope>GENOME REANNOTATION</scope>
    <source>
        <strain>cv. Columbia</strain>
    </source>
</reference>
<reference key="6">
    <citation type="journal article" date="2003" name="Science">
        <title>Empirical analysis of transcriptional activity in the Arabidopsis genome.</title>
        <authorList>
            <person name="Yamada K."/>
            <person name="Lim J."/>
            <person name="Dale J.M."/>
            <person name="Chen H."/>
            <person name="Shinn P."/>
            <person name="Palm C.J."/>
            <person name="Southwick A.M."/>
            <person name="Wu H.C."/>
            <person name="Kim C.J."/>
            <person name="Nguyen M."/>
            <person name="Pham P.K."/>
            <person name="Cheuk R.F."/>
            <person name="Karlin-Newmann G."/>
            <person name="Liu S.X."/>
            <person name="Lam B."/>
            <person name="Sakano H."/>
            <person name="Wu T."/>
            <person name="Yu G."/>
            <person name="Miranda M."/>
            <person name="Quach H.L."/>
            <person name="Tripp M."/>
            <person name="Chang C.H."/>
            <person name="Lee J.M."/>
            <person name="Toriumi M.J."/>
            <person name="Chan M.M."/>
            <person name="Tang C.C."/>
            <person name="Onodera C.S."/>
            <person name="Deng J.M."/>
            <person name="Akiyama K."/>
            <person name="Ansari Y."/>
            <person name="Arakawa T."/>
            <person name="Banh J."/>
            <person name="Banno F."/>
            <person name="Bowser L."/>
            <person name="Brooks S.Y."/>
            <person name="Carninci P."/>
            <person name="Chao Q."/>
            <person name="Choy N."/>
            <person name="Enju A."/>
            <person name="Goldsmith A.D."/>
            <person name="Gurjal M."/>
            <person name="Hansen N.F."/>
            <person name="Hayashizaki Y."/>
            <person name="Johnson-Hopson C."/>
            <person name="Hsuan V.W."/>
            <person name="Iida K."/>
            <person name="Karnes M."/>
            <person name="Khan S."/>
            <person name="Koesema E."/>
            <person name="Ishida J."/>
            <person name="Jiang P.X."/>
            <person name="Jones T."/>
            <person name="Kawai J."/>
            <person name="Kamiya A."/>
            <person name="Meyers C."/>
            <person name="Nakajima M."/>
            <person name="Narusaka M."/>
            <person name="Seki M."/>
            <person name="Sakurai T."/>
            <person name="Satou M."/>
            <person name="Tamse R."/>
            <person name="Vaysberg M."/>
            <person name="Wallender E.K."/>
            <person name="Wong C."/>
            <person name="Yamamura Y."/>
            <person name="Yuan S."/>
            <person name="Shinozaki K."/>
            <person name="Davis R.W."/>
            <person name="Theologis A."/>
            <person name="Ecker J.R."/>
        </authorList>
    </citation>
    <scope>NUCLEOTIDE SEQUENCE [LARGE SCALE MRNA] (ISOFORM 2)</scope>
    <source>
        <strain>cv. Columbia</strain>
    </source>
</reference>
<reference key="7">
    <citation type="submission" date="2006-07" db="EMBL/GenBank/DDBJ databases">
        <title>Large-scale analysis of RIKEN Arabidopsis full-length (RAFL) cDNAs.</title>
        <authorList>
            <person name="Totoki Y."/>
            <person name="Seki M."/>
            <person name="Ishida J."/>
            <person name="Nakajima M."/>
            <person name="Enju A."/>
            <person name="Kamiya A."/>
            <person name="Narusaka M."/>
            <person name="Shin-i T."/>
            <person name="Nakagawa M."/>
            <person name="Sakamoto N."/>
            <person name="Oishi K."/>
            <person name="Kohara Y."/>
            <person name="Kobayashi M."/>
            <person name="Toyoda A."/>
            <person name="Sakaki Y."/>
            <person name="Sakurai T."/>
            <person name="Iida K."/>
            <person name="Akiyama K."/>
            <person name="Satou M."/>
            <person name="Toyoda T."/>
            <person name="Konagaya A."/>
            <person name="Carninci P."/>
            <person name="Kawai J."/>
            <person name="Hayashizaki Y."/>
            <person name="Shinozaki K."/>
        </authorList>
    </citation>
    <scope>NUCLEOTIDE SEQUENCE [LARGE SCALE MRNA] (ISOFORM 2)</scope>
    <source>
        <strain>cv. Columbia</strain>
    </source>
</reference>
<reference key="8">
    <citation type="journal article" date="2002" name="J. Biol. Chem.">
        <title>Kinetic analysis of Arabidopsis phospholipase Ddelta. Substrate preference and mechanism of activation by Ca2+ and phosphatidylinositol 4,5-biphosphate.</title>
        <authorList>
            <person name="Qin C."/>
            <person name="Wang C."/>
            <person name="Wang X."/>
        </authorList>
    </citation>
    <scope>FUNCTION</scope>
    <scope>CATALYTIC ACTIVITY</scope>
    <scope>BIOPHYSICOCHEMICAL PROPERTIES</scope>
    <scope>ACTIVITY REGULATION</scope>
</reference>
<reference key="9">
    <citation type="journal article" date="2002" name="Plant Physiol.">
        <title>The Arabidopsis phospholipase D family. Characterization of a calcium-independent and phosphatidylcholine-selective PLD zeta 1 with distinct regulatory domains.</title>
        <authorList>
            <person name="Qin C."/>
            <person name="Wang X."/>
        </authorList>
    </citation>
    <scope>GENE FAMILY</scope>
    <scope>NOMENCLATURE</scope>
</reference>
<reference key="10">
    <citation type="journal article" date="2003" name="Plant Cell">
        <title>The oleate-stimulated phospholipase D, PLDdelta, and phosphatidic acid decrease H2O2-induced cell death in Arabidopsis.</title>
        <authorList>
            <person name="Zhang W."/>
            <person name="Wang C."/>
            <person name="Qin C."/>
            <person name="Wood T."/>
            <person name="Olafsdottir G."/>
            <person name="Welti R."/>
            <person name="Wang X."/>
        </authorList>
    </citation>
    <scope>DISRUPTION PHENOTYPE</scope>
    <scope>ACTIVITY REGULATION</scope>
</reference>
<reference key="11">
    <citation type="journal article" date="2003" name="Plant Cell Physiol.">
        <title>The effects of the phospholipase D-antagonist 1-butanol on seedling development and microtubule organisation in Arabidopsis.</title>
        <authorList>
            <person name="Gardiner J."/>
            <person name="Collings D.A."/>
            <person name="Harper J.D."/>
            <person name="Marc J."/>
        </authorList>
    </citation>
    <scope>FUNCTION</scope>
</reference>
<reference key="12">
    <citation type="journal article" date="2009" name="Plant Cell Physiol.">
        <title>Multiple PLDs required for high salinity and water deficit tolerance in plants.</title>
        <authorList>
            <person name="Bargmann B.O."/>
            <person name="Laxalt A.M."/>
            <person name="ter Riet B."/>
            <person name="van Schooten B."/>
            <person name="Merquiol E."/>
            <person name="Testerink C."/>
            <person name="Haring M.A."/>
            <person name="Bartels D."/>
            <person name="Munnik T."/>
        </authorList>
    </citation>
    <scope>INDUCTION</scope>
    <scope>DISRUPTION PHENOTYPE</scope>
</reference>
<reference key="13">
    <citation type="journal article" date="2012" name="Planta">
        <title>Phospholipase Ddelta is involved in nitric oxide-induced stomatal closure.</title>
        <authorList>
            <person name="Distefano A.M."/>
            <person name="Scuffi D."/>
            <person name="Garcia-Mata C."/>
            <person name="Lamattina L."/>
            <person name="Laxalt A.M."/>
        </authorList>
    </citation>
    <scope>FUNCTION</scope>
    <scope>TISSUE SPECIFICITY</scope>
    <scope>INDUCTION BY ABSCISIC ACID</scope>
    <scope>DISRUPTION PHENOTYPE</scope>
</reference>
<reference key="14">
    <citation type="journal article" date="2012" name="Plant Cell">
        <title>Cytosolic glyceraldehyde-3-phosphate dehydrogenases interact with phospholipase Ddelta to transduce hydrogen peroxide signals in the Arabidopsis response to stress.</title>
        <authorList>
            <person name="Guo L."/>
            <person name="Devaiah S.P."/>
            <person name="Narasimhan R."/>
            <person name="Pan X."/>
            <person name="Zhang Y."/>
            <person name="Zhang W."/>
            <person name="Wang X."/>
        </authorList>
    </citation>
    <scope>FUNCTION</scope>
    <scope>INTERACTION WITH GAPC1 AND GAPC2</scope>
    <scope>ACTIVITY REGULATION</scope>
</reference>
<reference key="15">
    <citation type="journal article" date="2012" name="Plant Physiol.">
        <title>Cooperative function of PLDdelta and PLDalpha1 in abscisic acid-induced stomatal closure in Arabidopsis.</title>
        <authorList>
            <person name="Uraji M."/>
            <person name="Katagiri T."/>
            <person name="Okuma E."/>
            <person name="Ye W."/>
            <person name="Hossain M.A."/>
            <person name="Masuda C."/>
            <person name="Miura A."/>
            <person name="Nakamura Y."/>
            <person name="Mori I.C."/>
            <person name="Shinozaki K."/>
            <person name="Murata Y."/>
        </authorList>
    </citation>
    <scope>FUNCTION</scope>
    <scope>INDUCTION BY ABSCISIC ACID</scope>
    <scope>DISRUPTION PHENOTYPE</scope>
</reference>
<reference key="16">
    <citation type="journal article" date="2013" name="PLoS ONE">
        <title>Lipid profiling demonstrates that suppressing Arabidopsis phospholipase Ddelta retards ABA-promoted leaf senescence by attenuating lipid degradation.</title>
        <authorList>
            <person name="Jia Y."/>
            <person name="Tao F."/>
            <person name="Li W."/>
        </authorList>
    </citation>
    <scope>FUNCTION</scope>
    <scope>DISRUPTION PHENOTYPE</scope>
</reference>
<reference key="17">
    <citation type="journal article" date="2013" name="Plant Physiol.">
        <title>Arabidopsis phospholipase ddelta is involved in basal defense and nonhost resistance to powdery mildew fungi.</title>
        <authorList>
            <person name="Pinosa F."/>
            <person name="Buhot N."/>
            <person name="Kwaaitaal M."/>
            <person name="Fahlberg P."/>
            <person name="Thordal-Christensen H."/>
            <person name="Ellerstrom M."/>
            <person name="Andersson M.X."/>
        </authorList>
    </citation>
    <scope>FUNCTION</scope>
    <scope>SUBCELLULAR LOCATION</scope>
    <scope>DISRUPTION PHENOTYPE</scope>
</reference>
<dbReference type="EC" id="3.1.4.4" evidence="6 7"/>
<dbReference type="EMBL" id="AF322228">
    <property type="protein sequence ID" value="AAG53975.1"/>
    <property type="molecule type" value="mRNA"/>
</dbReference>
<dbReference type="EMBL" id="AF274239">
    <property type="protein sequence ID" value="AAL02150.1"/>
    <property type="molecule type" value="mRNA"/>
</dbReference>
<dbReference type="EMBL" id="AF306345">
    <property type="protein sequence ID" value="AAL11978.1"/>
    <property type="molecule type" value="mRNA"/>
</dbReference>
<dbReference type="EMBL" id="AB031047">
    <property type="protein sequence ID" value="BAB19130.1"/>
    <property type="molecule type" value="mRNA"/>
</dbReference>
<dbReference type="EMBL" id="AL031986">
    <property type="protein sequence ID" value="CAA21465.1"/>
    <property type="status" value="ALT_SEQ"/>
    <property type="molecule type" value="Genomic_DNA"/>
</dbReference>
<dbReference type="EMBL" id="AL161588">
    <property type="protein sequence ID" value="CAB81488.1"/>
    <property type="status" value="ALT_SEQ"/>
    <property type="molecule type" value="Genomic_DNA"/>
</dbReference>
<dbReference type="EMBL" id="CP002687">
    <property type="protein sequence ID" value="AEE86571.1"/>
    <property type="molecule type" value="Genomic_DNA"/>
</dbReference>
<dbReference type="EMBL" id="CP002687">
    <property type="protein sequence ID" value="AEE86572.1"/>
    <property type="molecule type" value="Genomic_DNA"/>
</dbReference>
<dbReference type="EMBL" id="AF424632">
    <property type="protein sequence ID" value="AAL11625.1"/>
    <property type="status" value="ALT_FRAME"/>
    <property type="molecule type" value="mRNA"/>
</dbReference>
<dbReference type="EMBL" id="AY113045">
    <property type="protein sequence ID" value="AAM47353.1"/>
    <property type="molecule type" value="mRNA"/>
</dbReference>
<dbReference type="EMBL" id="AK227213">
    <property type="protein sequence ID" value="BAE99251.1"/>
    <property type="molecule type" value="mRNA"/>
</dbReference>
<dbReference type="RefSeq" id="NP_567989.1">
    <molecule id="Q9C5Y0-1"/>
    <property type="nucleotide sequence ID" value="NM_119745.3"/>
</dbReference>
<dbReference type="RefSeq" id="NP_849501.1">
    <molecule id="Q9C5Y0-2"/>
    <property type="nucleotide sequence ID" value="NM_179170.3"/>
</dbReference>
<dbReference type="SMR" id="Q9C5Y0"/>
<dbReference type="BioGRID" id="15015">
    <property type="interactions" value="5"/>
</dbReference>
<dbReference type="FunCoup" id="Q9C5Y0">
    <property type="interactions" value="761"/>
</dbReference>
<dbReference type="IntAct" id="Q9C5Y0">
    <property type="interactions" value="1"/>
</dbReference>
<dbReference type="STRING" id="3702.Q9C5Y0"/>
<dbReference type="SwissPalm" id="Q9C5Y0"/>
<dbReference type="PaxDb" id="3702-AT4G35790.1"/>
<dbReference type="ProteomicsDB" id="236633">
    <molecule id="Q9C5Y0-1"/>
</dbReference>
<dbReference type="EnsemblPlants" id="AT4G35790.1">
    <molecule id="Q9C5Y0-1"/>
    <property type="protein sequence ID" value="AT4G35790.1"/>
    <property type="gene ID" value="AT4G35790"/>
</dbReference>
<dbReference type="EnsemblPlants" id="AT4G35790.2">
    <molecule id="Q9C5Y0-2"/>
    <property type="protein sequence ID" value="AT4G35790.2"/>
    <property type="gene ID" value="AT4G35790"/>
</dbReference>
<dbReference type="GeneID" id="829733"/>
<dbReference type="Gramene" id="AT4G35790.1">
    <molecule id="Q9C5Y0-1"/>
    <property type="protein sequence ID" value="AT4G35790.1"/>
    <property type="gene ID" value="AT4G35790"/>
</dbReference>
<dbReference type="Gramene" id="AT4G35790.2">
    <molecule id="Q9C5Y0-2"/>
    <property type="protein sequence ID" value="AT4G35790.2"/>
    <property type="gene ID" value="AT4G35790"/>
</dbReference>
<dbReference type="KEGG" id="ath:AT4G35790"/>
<dbReference type="Araport" id="AT4G35790"/>
<dbReference type="TAIR" id="AT4G35790">
    <property type="gene designation" value="PLDDELTA"/>
</dbReference>
<dbReference type="eggNOG" id="KOG1329">
    <property type="taxonomic scope" value="Eukaryota"/>
</dbReference>
<dbReference type="InParanoid" id="Q9C5Y0"/>
<dbReference type="OMA" id="CAPHTAL"/>
<dbReference type="OrthoDB" id="14911at2759"/>
<dbReference type="PhylomeDB" id="Q9C5Y0"/>
<dbReference type="BioCyc" id="ARA:AT4G35790-MONOMER"/>
<dbReference type="BioCyc" id="MetaCyc:AT4G35790-MONOMER"/>
<dbReference type="BRENDA" id="3.1.4.4">
    <property type="organism ID" value="399"/>
</dbReference>
<dbReference type="PRO" id="PR:Q9C5Y0"/>
<dbReference type="Proteomes" id="UP000006548">
    <property type="component" value="Chromosome 4"/>
</dbReference>
<dbReference type="ExpressionAtlas" id="Q9C5Y0">
    <property type="expression patterns" value="baseline and differential"/>
</dbReference>
<dbReference type="GO" id="GO:0090395">
    <property type="term" value="C:plant cell papilla"/>
    <property type="evidence" value="ECO:0000314"/>
    <property type="project" value="TAIR"/>
</dbReference>
<dbReference type="GO" id="GO:0000325">
    <property type="term" value="C:plant-type vacuole"/>
    <property type="evidence" value="ECO:0007005"/>
    <property type="project" value="TAIR"/>
</dbReference>
<dbReference type="GO" id="GO:0005886">
    <property type="term" value="C:plasma membrane"/>
    <property type="evidence" value="ECO:0007005"/>
    <property type="project" value="TAIR"/>
</dbReference>
<dbReference type="GO" id="GO:0009506">
    <property type="term" value="C:plasmodesma"/>
    <property type="evidence" value="ECO:0007005"/>
    <property type="project" value="TAIR"/>
</dbReference>
<dbReference type="GO" id="GO:0005509">
    <property type="term" value="F:calcium ion binding"/>
    <property type="evidence" value="ECO:0007669"/>
    <property type="project" value="InterPro"/>
</dbReference>
<dbReference type="GO" id="GO:0004630">
    <property type="term" value="F:phospholipase D activity"/>
    <property type="evidence" value="ECO:0000314"/>
    <property type="project" value="TAIR"/>
</dbReference>
<dbReference type="GO" id="GO:0016042">
    <property type="term" value="P:lipid catabolic process"/>
    <property type="evidence" value="ECO:0007669"/>
    <property type="project" value="UniProtKB-KW"/>
</dbReference>
<dbReference type="GO" id="GO:0046473">
    <property type="term" value="P:phosphatidic acid metabolic process"/>
    <property type="evidence" value="ECO:0000315"/>
    <property type="project" value="TAIR"/>
</dbReference>
<dbReference type="GO" id="GO:0046470">
    <property type="term" value="P:phosphatidylcholine metabolic process"/>
    <property type="evidence" value="ECO:0007669"/>
    <property type="project" value="InterPro"/>
</dbReference>
<dbReference type="GO" id="GO:0009789">
    <property type="term" value="P:positive regulation of abscisic acid-activated signaling pathway"/>
    <property type="evidence" value="ECO:0000315"/>
    <property type="project" value="TAIR"/>
</dbReference>
<dbReference type="GO" id="GO:0012501">
    <property type="term" value="P:programmed cell death"/>
    <property type="evidence" value="ECO:0000315"/>
    <property type="project" value="TAIR"/>
</dbReference>
<dbReference type="GO" id="GO:0090333">
    <property type="term" value="P:regulation of stomatal closure"/>
    <property type="evidence" value="ECO:0000315"/>
    <property type="project" value="TAIR"/>
</dbReference>
<dbReference type="GO" id="GO:0009409">
    <property type="term" value="P:response to cold"/>
    <property type="evidence" value="ECO:0000315"/>
    <property type="project" value="TAIR"/>
</dbReference>
<dbReference type="CDD" id="cd04015">
    <property type="entry name" value="C2_plant_PLD"/>
    <property type="match status" value="1"/>
</dbReference>
<dbReference type="FunFam" id="3.30.870.10:FF:000027">
    <property type="entry name" value="Phospholipase D"/>
    <property type="match status" value="1"/>
</dbReference>
<dbReference type="FunFam" id="3.30.870.10:FF:000025">
    <property type="entry name" value="Phospholipase D delta"/>
    <property type="match status" value="1"/>
</dbReference>
<dbReference type="Gene3D" id="2.60.40.150">
    <property type="entry name" value="C2 domain"/>
    <property type="match status" value="1"/>
</dbReference>
<dbReference type="Gene3D" id="3.30.870.10">
    <property type="entry name" value="Endonuclease Chain A"/>
    <property type="match status" value="2"/>
</dbReference>
<dbReference type="InterPro" id="IPR000008">
    <property type="entry name" value="C2_dom"/>
</dbReference>
<dbReference type="InterPro" id="IPR035892">
    <property type="entry name" value="C2_domain_sf"/>
</dbReference>
<dbReference type="InterPro" id="IPR001736">
    <property type="entry name" value="PLipase_D/transphosphatidylase"/>
</dbReference>
<dbReference type="InterPro" id="IPR024632">
    <property type="entry name" value="PLipase_D_C"/>
</dbReference>
<dbReference type="InterPro" id="IPR015679">
    <property type="entry name" value="PLipase_D_fam"/>
</dbReference>
<dbReference type="InterPro" id="IPR011402">
    <property type="entry name" value="PLipase_D_pln"/>
</dbReference>
<dbReference type="PANTHER" id="PTHR18896">
    <property type="entry name" value="PHOSPHOLIPASE D"/>
    <property type="match status" value="1"/>
</dbReference>
<dbReference type="PANTHER" id="PTHR18896:SF86">
    <property type="entry name" value="PHOSPHOLIPASE D DELTA"/>
    <property type="match status" value="1"/>
</dbReference>
<dbReference type="Pfam" id="PF00168">
    <property type="entry name" value="C2"/>
    <property type="match status" value="1"/>
</dbReference>
<dbReference type="Pfam" id="PF12357">
    <property type="entry name" value="PLD_C"/>
    <property type="match status" value="1"/>
</dbReference>
<dbReference type="Pfam" id="PF00614">
    <property type="entry name" value="PLDc"/>
    <property type="match status" value="1"/>
</dbReference>
<dbReference type="PIRSF" id="PIRSF036470">
    <property type="entry name" value="PLD_plant"/>
    <property type="match status" value="1"/>
</dbReference>
<dbReference type="SMART" id="SM00239">
    <property type="entry name" value="C2"/>
    <property type="match status" value="1"/>
</dbReference>
<dbReference type="SMART" id="SM00155">
    <property type="entry name" value="PLDc"/>
    <property type="match status" value="2"/>
</dbReference>
<dbReference type="SUPFAM" id="SSF49562">
    <property type="entry name" value="C2 domain (Calcium/lipid-binding domain, CaLB)"/>
    <property type="match status" value="1"/>
</dbReference>
<dbReference type="SUPFAM" id="SSF56024">
    <property type="entry name" value="Phospholipase D/nuclease"/>
    <property type="match status" value="2"/>
</dbReference>
<dbReference type="PROSITE" id="PS50004">
    <property type="entry name" value="C2"/>
    <property type="match status" value="1"/>
</dbReference>
<dbReference type="PROSITE" id="PS50035">
    <property type="entry name" value="PLD"/>
    <property type="match status" value="2"/>
</dbReference>
<comment type="function">
    <text evidence="4 5 7 8 11 12 13 14 15">Hydrolyzes glycerol-phospholipids at the terminal phosphodiesteric bond to generate phosphatidic acids (PA). May be involved in PA accumulation in the dehydration stress response and in the transduction of hormonal and environmental signals to the microtubules cytoskeleton (PubMed:11489173, PubMed:11549769, PubMed:12881496). Prefers phosphatidylethanolamine to phosphatidylcholine as substrate (PubMed:12397060). Involved in H(2)O(2) and abscisic acid (ABA)-induced stomatal closure (PubMed:22392280, PubMed:22589465). Involved in nitric oxide (NO) signaling during stomatal closure (PubMed:22932846). Plays a positive role in ABA-promoted senescence (PubMed:23762411). Involved in basal defense and nonhost resistance (PubMed:23979971).</text>
</comment>
<comment type="catalytic activity">
    <reaction evidence="6 7">
        <text>a 1,2-diacyl-sn-glycero-3-phosphocholine + H2O = a 1,2-diacyl-sn-glycero-3-phosphate + choline + H(+)</text>
        <dbReference type="Rhea" id="RHEA:14445"/>
        <dbReference type="ChEBI" id="CHEBI:15354"/>
        <dbReference type="ChEBI" id="CHEBI:15377"/>
        <dbReference type="ChEBI" id="CHEBI:15378"/>
        <dbReference type="ChEBI" id="CHEBI:57643"/>
        <dbReference type="ChEBI" id="CHEBI:58608"/>
        <dbReference type="EC" id="3.1.4.4"/>
    </reaction>
</comment>
<comment type="cofactor">
    <cofactor evidence="6">
        <name>Ca(2+)</name>
        <dbReference type="ChEBI" id="CHEBI:29108"/>
    </cofactor>
    <text evidence="6">Ca(2+). Requires millimolar level (PIP2-dependent).</text>
</comment>
<comment type="activity regulation">
    <text evidence="6 7 9 12">Activated by free oleic acid in a dose-dependent manner and less effectively by other unsaturated fatty acids such as linoleic and linolenic acids (PubMed:11706190). Not activated by the saturated fatty acids stearic and palmitic acids (PubMed:11706190). PIP2 and Ca(2+) stimulate activity by promoting lipid substrate binding to the active site (PubMed:12397060). Activated by H(2)O(2) and by binding to GAPC (PubMed:14508007, PubMed:22589465).</text>
</comment>
<comment type="biophysicochemical properties">
    <kinetics>
        <Vmax evidence="7">1.0 umol/min/mg enzyme with phosphatidylcholine as substrate</Vmax>
        <Vmax evidence="7">1.5 umol/min/mg enzyme with phosphatidylethanolamine as substrate</Vmax>
    </kinetics>
    <phDependence>
        <text evidence="6">Optimum pH is between 6.0 and 7.0.</text>
    </phDependence>
</comment>
<comment type="subunit">
    <text evidence="12">Interacts with GAPC1 and GAPC2. Increased interaction in the presence of H(2)O(2).</text>
</comment>
<comment type="subcellular location">
    <subcellularLocation>
        <location evidence="6 15">Cell membrane</location>
        <topology>Peripheral membrane protein</topology>
    </subcellularLocation>
    <text evidence="5">Colocalization with cortical microtubules also occurs.</text>
</comment>
<comment type="alternative products">
    <event type="alternative splicing"/>
    <isoform>
        <id>Q9C5Y0-1</id>
        <name>1</name>
        <name>PLD delta a</name>
        <sequence type="displayed"/>
    </isoform>
    <isoform>
        <id>Q9C5Y0-2</id>
        <name>2</name>
        <name>PLD delta b</name>
        <sequence type="described" ref="VSP_005029"/>
    </isoform>
</comment>
<comment type="tissue specificity">
    <text evidence="4 6 13">Expressed in roots, leaves, stems, siliques and flowers (PubMed:11489173, PubMed:11706190). Strongly expressed in the vascular tissues of cotyledons and leaves under dehydration stress conditions (PubMed:11489173). Expression is higher in old leaves than in young leaves (PubMed:11706190). Expressed in leaves and guard cells (PubMed:22932846). The isoform 2 may not be present in siliques.</text>
</comment>
<comment type="induction">
    <text evidence="4 10 11 13">By salt stress or dehydration, in vascular tissues of roots, cotyledons and leaves (PubMed:11489173, PubMed:19017627). Not induced cold stress (PubMed:11489173). Up-regulated by abscisic acid in rosette leaves (PubMed:22392280, PubMed:22932846).</text>
</comment>
<comment type="domain">
    <text evidence="21">C2 domain is a calcium-binding fold, and the binding promotes the protein association with membranes. In PLD delta, all the calcium-coordinating acidic amino acids are conserved.</text>
</comment>
<comment type="disruption phenotype">
    <text evidence="9 10 11 13 14 15">No visible phenotype when grown under standard conditions (PubMed:22932846). Loss of oleate-activated PLD activity and increased sensitivity to stress damage and to H(2)O(2)-induced cell death (PubMed:14508007). Hypersensitivity to hyperosmotic stress (PubMed:19017627). Impaired stomatal closure in response to nitric oxide donor (PubMed:22932846). Attenuated lipid degradation retarding abscisic acid (ABA)-promoted leaf senescence (PubMed:23762411). Decreased penetration resistance against non-host fungi (PubMed:23979971). No effect on ABA-induced stomatal closure (PubMed:22392280). Pldalpha1 and plddelta double mutants have a suppressed ABA-induced stomatal closure (PubMed:22392280).</text>
</comment>
<comment type="similarity">
    <text evidence="21">Belongs to the phospholipase D family. C2-PLD subfamily.</text>
</comment>
<comment type="sequence caution" evidence="21">
    <conflict type="frameshift">
        <sequence resource="EMBL-CDS" id="AAL11625"/>
    </conflict>
</comment>
<comment type="sequence caution" evidence="21">
    <conflict type="erroneous gene model prediction">
        <sequence resource="EMBL-CDS" id="CAA21465"/>
    </conflict>
</comment>
<comment type="sequence caution" evidence="21">
    <conflict type="erroneous gene model prediction">
        <sequence resource="EMBL-CDS" id="CAB81488"/>
    </conflict>
</comment>